<gene>
    <name evidence="1" type="primary">cysS</name>
    <name type="ordered locus">Bcer98_0084</name>
</gene>
<keyword id="KW-0030">Aminoacyl-tRNA synthetase</keyword>
<keyword id="KW-0067">ATP-binding</keyword>
<keyword id="KW-0963">Cytoplasm</keyword>
<keyword id="KW-0436">Ligase</keyword>
<keyword id="KW-0479">Metal-binding</keyword>
<keyword id="KW-0547">Nucleotide-binding</keyword>
<keyword id="KW-0597">Phosphoprotein</keyword>
<keyword id="KW-0648">Protein biosynthesis</keyword>
<keyword id="KW-0862">Zinc</keyword>
<proteinExistence type="inferred from homology"/>
<sequence>MTIHIYNTLTRQKEEFIPLEEKKVKMYVCGPTVYNYIHIGNARPPMVFDTVRRYLEHKGYDVQYVSNFTDVDDKLIKAANELGEDVPTIAERFIEAYFEDVTALGCKHATVHPRVTENMDIIIEFIQELVNKGYAYESEGDVYYRTKEFEGYGKLSHQAIEDLRHGARIEVGEKKQDPLDFALWKAAKEGEIFWESPWGKGRPGWHIECSAMARKYLGDSIDIHAGGQDLSFPHHENEIAQSEALTGKPFARYWMHNGYININNEKMSKSLGNFILVHDIIKQYDPQLIRFFMLSVHYRHPINFSEELLQSTNNGLERIKTTYRNLKHRIESSTDLTDHNEKWLAEMKEFQSAFEAAMDDDFNTANAITELYNLANHANQYLLEEHTSKVVIEAYINQLEMLFRILGLVFTKEELLDKEIEALIQKRIEARKNRDFALADKIRDDLKERNIILEDTAQGTRWKRG</sequence>
<feature type="chain" id="PRO_0000332788" description="Cysteine--tRNA ligase">
    <location>
        <begin position="1"/>
        <end position="465"/>
    </location>
</feature>
<feature type="short sequence motif" description="'HIGH' region">
    <location>
        <begin position="31"/>
        <end position="41"/>
    </location>
</feature>
<feature type="short sequence motif" description="'KMSKS' region">
    <location>
        <begin position="266"/>
        <end position="270"/>
    </location>
</feature>
<feature type="binding site" evidence="1">
    <location>
        <position position="29"/>
    </location>
    <ligand>
        <name>Zn(2+)</name>
        <dbReference type="ChEBI" id="CHEBI:29105"/>
    </ligand>
</feature>
<feature type="binding site" evidence="1">
    <location>
        <position position="209"/>
    </location>
    <ligand>
        <name>Zn(2+)</name>
        <dbReference type="ChEBI" id="CHEBI:29105"/>
    </ligand>
</feature>
<feature type="binding site" evidence="1">
    <location>
        <position position="234"/>
    </location>
    <ligand>
        <name>Zn(2+)</name>
        <dbReference type="ChEBI" id="CHEBI:29105"/>
    </ligand>
</feature>
<feature type="binding site" evidence="1">
    <location>
        <position position="238"/>
    </location>
    <ligand>
        <name>Zn(2+)</name>
        <dbReference type="ChEBI" id="CHEBI:29105"/>
    </ligand>
</feature>
<feature type="binding site" evidence="1">
    <location>
        <position position="269"/>
    </location>
    <ligand>
        <name>ATP</name>
        <dbReference type="ChEBI" id="CHEBI:30616"/>
    </ligand>
</feature>
<feature type="modified residue" description="Phosphoserine" evidence="1">
    <location>
        <position position="270"/>
    </location>
</feature>
<protein>
    <recommendedName>
        <fullName evidence="1">Cysteine--tRNA ligase</fullName>
        <ecNumber evidence="1">6.1.1.16</ecNumber>
    </recommendedName>
    <alternativeName>
        <fullName evidence="1">Cysteinyl-tRNA synthetase</fullName>
        <shortName evidence="1">CysRS</shortName>
    </alternativeName>
</protein>
<comment type="catalytic activity">
    <reaction evidence="1">
        <text>tRNA(Cys) + L-cysteine + ATP = L-cysteinyl-tRNA(Cys) + AMP + diphosphate</text>
        <dbReference type="Rhea" id="RHEA:17773"/>
        <dbReference type="Rhea" id="RHEA-COMP:9661"/>
        <dbReference type="Rhea" id="RHEA-COMP:9679"/>
        <dbReference type="ChEBI" id="CHEBI:30616"/>
        <dbReference type="ChEBI" id="CHEBI:33019"/>
        <dbReference type="ChEBI" id="CHEBI:35235"/>
        <dbReference type="ChEBI" id="CHEBI:78442"/>
        <dbReference type="ChEBI" id="CHEBI:78517"/>
        <dbReference type="ChEBI" id="CHEBI:456215"/>
        <dbReference type="EC" id="6.1.1.16"/>
    </reaction>
</comment>
<comment type="cofactor">
    <cofactor evidence="1">
        <name>Zn(2+)</name>
        <dbReference type="ChEBI" id="CHEBI:29105"/>
    </cofactor>
    <text evidence="1">Binds 1 zinc ion per subunit.</text>
</comment>
<comment type="subunit">
    <text evidence="1">Monomer.</text>
</comment>
<comment type="subcellular location">
    <subcellularLocation>
        <location evidence="1">Cytoplasm</location>
    </subcellularLocation>
</comment>
<comment type="similarity">
    <text evidence="1">Belongs to the class-I aminoacyl-tRNA synthetase family.</text>
</comment>
<name>SYC_BACCN</name>
<reference key="1">
    <citation type="journal article" date="2008" name="Chem. Biol. Interact.">
        <title>Extending the Bacillus cereus group genomics to putative food-borne pathogens of different toxicity.</title>
        <authorList>
            <person name="Lapidus A."/>
            <person name="Goltsman E."/>
            <person name="Auger S."/>
            <person name="Galleron N."/>
            <person name="Segurens B."/>
            <person name="Dossat C."/>
            <person name="Land M.L."/>
            <person name="Broussolle V."/>
            <person name="Brillard J."/>
            <person name="Guinebretiere M.-H."/>
            <person name="Sanchis V."/>
            <person name="Nguen-the C."/>
            <person name="Lereclus D."/>
            <person name="Richardson P."/>
            <person name="Wincker P."/>
            <person name="Weissenbach J."/>
            <person name="Ehrlich S.D."/>
            <person name="Sorokin A."/>
        </authorList>
    </citation>
    <scope>NUCLEOTIDE SEQUENCE [LARGE SCALE GENOMIC DNA]</scope>
    <source>
        <strain>DSM 22905 / CIP 110041 / 391-98 / NVH 391-98</strain>
    </source>
</reference>
<organism>
    <name type="scientific">Bacillus cytotoxicus (strain DSM 22905 / CIP 110041 / 391-98 / NVH 391-98)</name>
    <dbReference type="NCBI Taxonomy" id="315749"/>
    <lineage>
        <taxon>Bacteria</taxon>
        <taxon>Bacillati</taxon>
        <taxon>Bacillota</taxon>
        <taxon>Bacilli</taxon>
        <taxon>Bacillales</taxon>
        <taxon>Bacillaceae</taxon>
        <taxon>Bacillus</taxon>
        <taxon>Bacillus cereus group</taxon>
    </lineage>
</organism>
<evidence type="ECO:0000255" key="1">
    <source>
        <dbReference type="HAMAP-Rule" id="MF_00041"/>
    </source>
</evidence>
<dbReference type="EC" id="6.1.1.16" evidence="1"/>
<dbReference type="EMBL" id="CP000764">
    <property type="protein sequence ID" value="ABS20459.1"/>
    <property type="molecule type" value="Genomic_DNA"/>
</dbReference>
<dbReference type="RefSeq" id="WP_011983228.1">
    <property type="nucleotide sequence ID" value="NC_009674.1"/>
</dbReference>
<dbReference type="SMR" id="A7GK01"/>
<dbReference type="STRING" id="315749.Bcer98_0084"/>
<dbReference type="GeneID" id="33895405"/>
<dbReference type="KEGG" id="bcy:Bcer98_0084"/>
<dbReference type="eggNOG" id="COG0215">
    <property type="taxonomic scope" value="Bacteria"/>
</dbReference>
<dbReference type="HOGENOM" id="CLU_013528_0_1_9"/>
<dbReference type="OrthoDB" id="9815130at2"/>
<dbReference type="Proteomes" id="UP000002300">
    <property type="component" value="Chromosome"/>
</dbReference>
<dbReference type="GO" id="GO:0005829">
    <property type="term" value="C:cytosol"/>
    <property type="evidence" value="ECO:0007669"/>
    <property type="project" value="TreeGrafter"/>
</dbReference>
<dbReference type="GO" id="GO:0005524">
    <property type="term" value="F:ATP binding"/>
    <property type="evidence" value="ECO:0007669"/>
    <property type="project" value="UniProtKB-UniRule"/>
</dbReference>
<dbReference type="GO" id="GO:0004817">
    <property type="term" value="F:cysteine-tRNA ligase activity"/>
    <property type="evidence" value="ECO:0007669"/>
    <property type="project" value="UniProtKB-UniRule"/>
</dbReference>
<dbReference type="GO" id="GO:0008270">
    <property type="term" value="F:zinc ion binding"/>
    <property type="evidence" value="ECO:0007669"/>
    <property type="project" value="UniProtKB-UniRule"/>
</dbReference>
<dbReference type="GO" id="GO:0006423">
    <property type="term" value="P:cysteinyl-tRNA aminoacylation"/>
    <property type="evidence" value="ECO:0007669"/>
    <property type="project" value="UniProtKB-UniRule"/>
</dbReference>
<dbReference type="CDD" id="cd00672">
    <property type="entry name" value="CysRS_core"/>
    <property type="match status" value="1"/>
</dbReference>
<dbReference type="FunFam" id="1.20.120.1910:FF:000002">
    <property type="entry name" value="Cysteine--tRNA ligase"/>
    <property type="match status" value="1"/>
</dbReference>
<dbReference type="FunFam" id="3.40.50.620:FF:000009">
    <property type="entry name" value="Cysteine--tRNA ligase"/>
    <property type="match status" value="1"/>
</dbReference>
<dbReference type="Gene3D" id="1.20.120.1910">
    <property type="entry name" value="Cysteine-tRNA ligase, C-terminal anti-codon recognition domain"/>
    <property type="match status" value="1"/>
</dbReference>
<dbReference type="Gene3D" id="3.40.50.620">
    <property type="entry name" value="HUPs"/>
    <property type="match status" value="1"/>
</dbReference>
<dbReference type="HAMAP" id="MF_00041">
    <property type="entry name" value="Cys_tRNA_synth"/>
    <property type="match status" value="1"/>
</dbReference>
<dbReference type="InterPro" id="IPR015803">
    <property type="entry name" value="Cys-tRNA-ligase"/>
</dbReference>
<dbReference type="InterPro" id="IPR015273">
    <property type="entry name" value="Cys-tRNA-synt_Ia_DALR"/>
</dbReference>
<dbReference type="InterPro" id="IPR024909">
    <property type="entry name" value="Cys-tRNA/MSH_ligase"/>
</dbReference>
<dbReference type="InterPro" id="IPR056411">
    <property type="entry name" value="CysS_C"/>
</dbReference>
<dbReference type="InterPro" id="IPR014729">
    <property type="entry name" value="Rossmann-like_a/b/a_fold"/>
</dbReference>
<dbReference type="InterPro" id="IPR032678">
    <property type="entry name" value="tRNA-synt_1_cat_dom"/>
</dbReference>
<dbReference type="InterPro" id="IPR009080">
    <property type="entry name" value="tRNAsynth_Ia_anticodon-bd"/>
</dbReference>
<dbReference type="NCBIfam" id="TIGR00435">
    <property type="entry name" value="cysS"/>
    <property type="match status" value="1"/>
</dbReference>
<dbReference type="PANTHER" id="PTHR10890:SF3">
    <property type="entry name" value="CYSTEINE--TRNA LIGASE, CYTOPLASMIC"/>
    <property type="match status" value="1"/>
</dbReference>
<dbReference type="PANTHER" id="PTHR10890">
    <property type="entry name" value="CYSTEINYL-TRNA SYNTHETASE"/>
    <property type="match status" value="1"/>
</dbReference>
<dbReference type="Pfam" id="PF23493">
    <property type="entry name" value="CysS_C"/>
    <property type="match status" value="1"/>
</dbReference>
<dbReference type="Pfam" id="PF09190">
    <property type="entry name" value="DALR_2"/>
    <property type="match status" value="1"/>
</dbReference>
<dbReference type="Pfam" id="PF01406">
    <property type="entry name" value="tRNA-synt_1e"/>
    <property type="match status" value="1"/>
</dbReference>
<dbReference type="PRINTS" id="PR00983">
    <property type="entry name" value="TRNASYNTHCYS"/>
</dbReference>
<dbReference type="SMART" id="SM00840">
    <property type="entry name" value="DALR_2"/>
    <property type="match status" value="1"/>
</dbReference>
<dbReference type="SUPFAM" id="SSF47323">
    <property type="entry name" value="Anticodon-binding domain of a subclass of class I aminoacyl-tRNA synthetases"/>
    <property type="match status" value="1"/>
</dbReference>
<dbReference type="SUPFAM" id="SSF52374">
    <property type="entry name" value="Nucleotidylyl transferase"/>
    <property type="match status" value="1"/>
</dbReference>
<accession>A7GK01</accession>